<keyword id="KW-0678">Repressor</keyword>
<keyword id="KW-0346">Stress response</keyword>
<keyword id="KW-0804">Transcription</keyword>
<keyword id="KW-0805">Transcription regulation</keyword>
<organism>
    <name type="scientific">Dechloromonas aromatica (strain RCB)</name>
    <dbReference type="NCBI Taxonomy" id="159087"/>
    <lineage>
        <taxon>Bacteria</taxon>
        <taxon>Pseudomonadati</taxon>
        <taxon>Pseudomonadota</taxon>
        <taxon>Betaproteobacteria</taxon>
        <taxon>Rhodocyclales</taxon>
        <taxon>Azonexaceae</taxon>
        <taxon>Dechloromonas</taxon>
    </lineage>
</organism>
<reference key="1">
    <citation type="journal article" date="2009" name="BMC Genomics">
        <title>Metabolic analysis of the soil microbe Dechloromonas aromatica str. RCB: indications of a surprisingly complex life-style and cryptic anaerobic pathways for aromatic degradation.</title>
        <authorList>
            <person name="Salinero K.K."/>
            <person name="Keller K."/>
            <person name="Feil W.S."/>
            <person name="Feil H."/>
            <person name="Trong S."/>
            <person name="Di Bartolo G."/>
            <person name="Lapidus A."/>
        </authorList>
    </citation>
    <scope>NUCLEOTIDE SEQUENCE [LARGE SCALE GENOMIC DNA]</scope>
    <source>
        <strain>RCB</strain>
    </source>
</reference>
<proteinExistence type="inferred from homology"/>
<protein>
    <recommendedName>
        <fullName evidence="1">Heat-inducible transcription repressor HrcA</fullName>
    </recommendedName>
</protein>
<comment type="function">
    <text evidence="1">Negative regulator of class I heat shock genes (grpE-dnaK-dnaJ and groELS operons). Prevents heat-shock induction of these operons.</text>
</comment>
<comment type="similarity">
    <text evidence="1">Belongs to the HrcA family.</text>
</comment>
<name>HRCA_DECAR</name>
<accession>Q47HJ5</accession>
<dbReference type="EMBL" id="CP000089">
    <property type="protein sequence ID" value="AAZ45686.1"/>
    <property type="molecule type" value="Genomic_DNA"/>
</dbReference>
<dbReference type="SMR" id="Q47HJ5"/>
<dbReference type="STRING" id="159087.Daro_0930"/>
<dbReference type="KEGG" id="dar:Daro_0930"/>
<dbReference type="eggNOG" id="COG1420">
    <property type="taxonomic scope" value="Bacteria"/>
</dbReference>
<dbReference type="HOGENOM" id="CLU_050019_0_0_4"/>
<dbReference type="OrthoDB" id="9783139at2"/>
<dbReference type="GO" id="GO:0003677">
    <property type="term" value="F:DNA binding"/>
    <property type="evidence" value="ECO:0007669"/>
    <property type="project" value="InterPro"/>
</dbReference>
<dbReference type="GO" id="GO:0045892">
    <property type="term" value="P:negative regulation of DNA-templated transcription"/>
    <property type="evidence" value="ECO:0007669"/>
    <property type="project" value="UniProtKB-UniRule"/>
</dbReference>
<dbReference type="Gene3D" id="3.30.450.40">
    <property type="match status" value="1"/>
</dbReference>
<dbReference type="Gene3D" id="3.30.390.60">
    <property type="entry name" value="Heat-inducible transcription repressor hrca homolog, domain 3"/>
    <property type="match status" value="1"/>
</dbReference>
<dbReference type="Gene3D" id="1.10.10.10">
    <property type="entry name" value="Winged helix-like DNA-binding domain superfamily/Winged helix DNA-binding domain"/>
    <property type="match status" value="1"/>
</dbReference>
<dbReference type="HAMAP" id="MF_00081">
    <property type="entry name" value="HrcA"/>
    <property type="match status" value="1"/>
</dbReference>
<dbReference type="InterPro" id="IPR029016">
    <property type="entry name" value="GAF-like_dom_sf"/>
</dbReference>
<dbReference type="InterPro" id="IPR002571">
    <property type="entry name" value="HrcA"/>
</dbReference>
<dbReference type="InterPro" id="IPR021153">
    <property type="entry name" value="HrcA_C"/>
</dbReference>
<dbReference type="InterPro" id="IPR036388">
    <property type="entry name" value="WH-like_DNA-bd_sf"/>
</dbReference>
<dbReference type="InterPro" id="IPR036390">
    <property type="entry name" value="WH_DNA-bd_sf"/>
</dbReference>
<dbReference type="InterPro" id="IPR005104">
    <property type="entry name" value="WHTH_HrcA_DNA-bd"/>
</dbReference>
<dbReference type="InterPro" id="IPR023120">
    <property type="entry name" value="WHTH_transcript_rep_HrcA_IDD"/>
</dbReference>
<dbReference type="NCBIfam" id="TIGR00331">
    <property type="entry name" value="hrcA"/>
    <property type="match status" value="1"/>
</dbReference>
<dbReference type="PANTHER" id="PTHR34824">
    <property type="entry name" value="HEAT-INDUCIBLE TRANSCRIPTION REPRESSOR HRCA"/>
    <property type="match status" value="1"/>
</dbReference>
<dbReference type="PANTHER" id="PTHR34824:SF1">
    <property type="entry name" value="HEAT-INDUCIBLE TRANSCRIPTION REPRESSOR HRCA"/>
    <property type="match status" value="1"/>
</dbReference>
<dbReference type="Pfam" id="PF01628">
    <property type="entry name" value="HrcA"/>
    <property type="match status" value="1"/>
</dbReference>
<dbReference type="Pfam" id="PF03444">
    <property type="entry name" value="HrcA_DNA-bdg"/>
    <property type="match status" value="1"/>
</dbReference>
<dbReference type="PIRSF" id="PIRSF005485">
    <property type="entry name" value="HrcA"/>
    <property type="match status" value="1"/>
</dbReference>
<dbReference type="SUPFAM" id="SSF55781">
    <property type="entry name" value="GAF domain-like"/>
    <property type="match status" value="1"/>
</dbReference>
<dbReference type="SUPFAM" id="SSF46785">
    <property type="entry name" value="Winged helix' DNA-binding domain"/>
    <property type="match status" value="1"/>
</dbReference>
<feature type="chain" id="PRO_1000010403" description="Heat-inducible transcription repressor HrcA">
    <location>
        <begin position="1"/>
        <end position="342"/>
    </location>
</feature>
<gene>
    <name evidence="1" type="primary">hrcA</name>
    <name type="ordered locus">Daro_0930</name>
</gene>
<evidence type="ECO:0000255" key="1">
    <source>
        <dbReference type="HAMAP-Rule" id="MF_00081"/>
    </source>
</evidence>
<sequence length="342" mass="37344">MLDERARTLLKTLVEHYVADGQPVGSRALSKFSGLDLSPATIRNVMADLEEAGFVASPHTSAGRIPTARGYRLFVDSLLTVQPLEARQMGEMEEALHGRPAGQIIASASQLLSSLTHFAGVVIAPRRQSSRIRQIEFLSLSEKRILLIIVTADGDVQNRIVTTDKVYSPAELVSAANYLTQNFAGLDFEQIRHRLTVEIKQLRDDIKPLMALALDAGDAAMAENTTPYVISGERNLLDVEELSSNMKRLRELFDLFEQRSSLMRLLEISNSAEGVQIFIGGESGIATLDECSVIAAPYTVDGQVVGSVGVIGPTRMAYERVIPIVDITARLLSSALSYKSDN</sequence>